<keyword id="KW-0997">Cell inner membrane</keyword>
<keyword id="KW-1003">Cell membrane</keyword>
<keyword id="KW-0472">Membrane</keyword>
<keyword id="KW-0653">Protein transport</keyword>
<keyword id="KW-1185">Reference proteome</keyword>
<keyword id="KW-0811">Translocation</keyword>
<keyword id="KW-0812">Transmembrane</keyword>
<keyword id="KW-1133">Transmembrane helix</keyword>
<keyword id="KW-0813">Transport</keyword>
<evidence type="ECO:0000255" key="1">
    <source>
        <dbReference type="HAMAP-Rule" id="MF_00237"/>
    </source>
</evidence>
<evidence type="ECO:0000256" key="2">
    <source>
        <dbReference type="SAM" id="MobiDB-lite"/>
    </source>
</evidence>
<feature type="chain" id="PRO_0000301166" description="Sec-independent protein translocase protein TatB">
    <location>
        <begin position="1"/>
        <end position="197"/>
    </location>
</feature>
<feature type="transmembrane region" description="Helical" evidence="1">
    <location>
        <begin position="1"/>
        <end position="21"/>
    </location>
</feature>
<feature type="region of interest" description="Disordered" evidence="2">
    <location>
        <begin position="93"/>
        <end position="197"/>
    </location>
</feature>
<feature type="compositionally biased region" description="Basic and acidic residues" evidence="2">
    <location>
        <begin position="104"/>
        <end position="113"/>
    </location>
</feature>
<feature type="compositionally biased region" description="Basic and acidic residues" evidence="2">
    <location>
        <begin position="160"/>
        <end position="169"/>
    </location>
</feature>
<feature type="compositionally biased region" description="Low complexity" evidence="2">
    <location>
        <begin position="180"/>
        <end position="197"/>
    </location>
</feature>
<gene>
    <name evidence="1" type="primary">tatB</name>
    <name type="ordered locus">ECA0200</name>
</gene>
<proteinExistence type="inferred from homology"/>
<name>TATB_PECAS</name>
<dbReference type="EMBL" id="BX950851">
    <property type="protein sequence ID" value="CAG73119.1"/>
    <property type="molecule type" value="Genomic_DNA"/>
</dbReference>
<dbReference type="RefSeq" id="WP_011091839.1">
    <property type="nucleotide sequence ID" value="NC_004547.2"/>
</dbReference>
<dbReference type="SMR" id="Q6DAQ3"/>
<dbReference type="STRING" id="218491.ECA0200"/>
<dbReference type="DNASU" id="2884322"/>
<dbReference type="KEGG" id="eca:ECA0200"/>
<dbReference type="PATRIC" id="fig|218491.5.peg.199"/>
<dbReference type="eggNOG" id="COG1826">
    <property type="taxonomic scope" value="Bacteria"/>
</dbReference>
<dbReference type="HOGENOM" id="CLU_086034_1_0_6"/>
<dbReference type="OrthoDB" id="9816005at2"/>
<dbReference type="Proteomes" id="UP000007966">
    <property type="component" value="Chromosome"/>
</dbReference>
<dbReference type="GO" id="GO:0033281">
    <property type="term" value="C:TAT protein transport complex"/>
    <property type="evidence" value="ECO:0007669"/>
    <property type="project" value="UniProtKB-UniRule"/>
</dbReference>
<dbReference type="GO" id="GO:0008320">
    <property type="term" value="F:protein transmembrane transporter activity"/>
    <property type="evidence" value="ECO:0007669"/>
    <property type="project" value="UniProtKB-UniRule"/>
</dbReference>
<dbReference type="GO" id="GO:0043953">
    <property type="term" value="P:protein transport by the Tat complex"/>
    <property type="evidence" value="ECO:0007669"/>
    <property type="project" value="UniProtKB-UniRule"/>
</dbReference>
<dbReference type="Gene3D" id="1.20.5.3310">
    <property type="match status" value="1"/>
</dbReference>
<dbReference type="HAMAP" id="MF_00237">
    <property type="entry name" value="TatB"/>
    <property type="match status" value="1"/>
</dbReference>
<dbReference type="InterPro" id="IPR018448">
    <property type="entry name" value="TatB"/>
</dbReference>
<dbReference type="NCBIfam" id="TIGR01410">
    <property type="entry name" value="tatB"/>
    <property type="match status" value="1"/>
</dbReference>
<dbReference type="PANTHER" id="PTHR33162">
    <property type="entry name" value="SEC-INDEPENDENT PROTEIN TRANSLOCASE PROTEIN TATA, CHLOROPLASTIC"/>
    <property type="match status" value="1"/>
</dbReference>
<dbReference type="PANTHER" id="PTHR33162:SF1">
    <property type="entry name" value="SEC-INDEPENDENT PROTEIN TRANSLOCASE PROTEIN TATA, CHLOROPLASTIC"/>
    <property type="match status" value="1"/>
</dbReference>
<dbReference type="PRINTS" id="PR01506">
    <property type="entry name" value="TATBPROTEIN"/>
</dbReference>
<organism>
    <name type="scientific">Pectobacterium atrosepticum (strain SCRI 1043 / ATCC BAA-672)</name>
    <name type="common">Erwinia carotovora subsp. atroseptica</name>
    <dbReference type="NCBI Taxonomy" id="218491"/>
    <lineage>
        <taxon>Bacteria</taxon>
        <taxon>Pseudomonadati</taxon>
        <taxon>Pseudomonadota</taxon>
        <taxon>Gammaproteobacteria</taxon>
        <taxon>Enterobacterales</taxon>
        <taxon>Pectobacteriaceae</taxon>
        <taxon>Pectobacterium</taxon>
    </lineage>
</organism>
<reference key="1">
    <citation type="journal article" date="2004" name="Proc. Natl. Acad. Sci. U.S.A.">
        <title>Genome sequence of the enterobacterial phytopathogen Erwinia carotovora subsp. atroseptica and characterization of virulence factors.</title>
        <authorList>
            <person name="Bell K.S."/>
            <person name="Sebaihia M."/>
            <person name="Pritchard L."/>
            <person name="Holden M.T.G."/>
            <person name="Hyman L.J."/>
            <person name="Holeva M.C."/>
            <person name="Thomson N.R."/>
            <person name="Bentley S.D."/>
            <person name="Churcher L.J.C."/>
            <person name="Mungall K."/>
            <person name="Atkin R."/>
            <person name="Bason N."/>
            <person name="Brooks K."/>
            <person name="Chillingworth T."/>
            <person name="Clark K."/>
            <person name="Doggett J."/>
            <person name="Fraser A."/>
            <person name="Hance Z."/>
            <person name="Hauser H."/>
            <person name="Jagels K."/>
            <person name="Moule S."/>
            <person name="Norbertczak H."/>
            <person name="Ormond D."/>
            <person name="Price C."/>
            <person name="Quail M.A."/>
            <person name="Sanders M."/>
            <person name="Walker D."/>
            <person name="Whitehead S."/>
            <person name="Salmond G.P.C."/>
            <person name="Birch P.R.J."/>
            <person name="Parkhill J."/>
            <person name="Toth I.K."/>
        </authorList>
    </citation>
    <scope>NUCLEOTIDE SEQUENCE [LARGE SCALE GENOMIC DNA]</scope>
    <source>
        <strain>SCRI 1043 / ATCC BAA-672</strain>
    </source>
</reference>
<accession>Q6DAQ3</accession>
<protein>
    <recommendedName>
        <fullName evidence="1">Sec-independent protein translocase protein TatB</fullName>
    </recommendedName>
</protein>
<sequence>MFDIGFGELLLVMVLGLIVLGPERLPVAVRTVASWIRTLRSLASTVQNELSQELKLQEFQESLKKVEKASLQNLSPELKASMDELKDAAEAMKRGYTETPSPQKSDDPKKSGDHSATVEPQSNIPLNDPEAAYDGVIEAETAVRPADSQQKPENAAVAENHNDGRHATSDEAVGNNNVKPEQSQPSAASARQPSDSR</sequence>
<comment type="function">
    <text evidence="1">Part of the twin-arginine translocation (Tat) system that transports large folded proteins containing a characteristic twin-arginine motif in their signal peptide across membranes. Together with TatC, TatB is part of a receptor directly interacting with Tat signal peptides. TatB may form an oligomeric binding site that transiently accommodates folded Tat precursor proteins before their translocation.</text>
</comment>
<comment type="subunit">
    <text evidence="1">The Tat system comprises two distinct complexes: a TatABC complex, containing multiple copies of TatA, TatB and TatC subunits, and a separate TatA complex, containing only TatA subunits. Substrates initially bind to the TatABC complex, which probably triggers association of the separate TatA complex to form the active translocon.</text>
</comment>
<comment type="subcellular location">
    <subcellularLocation>
        <location evidence="1">Cell inner membrane</location>
        <topology evidence="1">Single-pass membrane protein</topology>
    </subcellularLocation>
</comment>
<comment type="similarity">
    <text evidence="1">Belongs to the TatB family.</text>
</comment>